<name>YJHX_ECOBW</name>
<proteinExistence type="inferred from homology"/>
<organism>
    <name type="scientific">Escherichia coli (strain K12 / MC4100 / BW2952)</name>
    <dbReference type="NCBI Taxonomy" id="595496"/>
    <lineage>
        <taxon>Bacteria</taxon>
        <taxon>Pseudomonadati</taxon>
        <taxon>Pseudomonadota</taxon>
        <taxon>Gammaproteobacteria</taxon>
        <taxon>Enterobacterales</taxon>
        <taxon>Enterobacteriaceae</taxon>
        <taxon>Escherichia</taxon>
    </lineage>
</organism>
<protein>
    <recommendedName>
        <fullName evidence="1">UPF0386 protein YjhX</fullName>
    </recommendedName>
</protein>
<evidence type="ECO:0000255" key="1">
    <source>
        <dbReference type="HAMAP-Rule" id="MF_00827"/>
    </source>
</evidence>
<reference key="1">
    <citation type="journal article" date="2009" name="J. Bacteriol.">
        <title>Genomic sequencing reveals regulatory mutations and recombinational events in the widely used MC4100 lineage of Escherichia coli K-12.</title>
        <authorList>
            <person name="Ferenci T."/>
            <person name="Zhou Z."/>
            <person name="Betteridge T."/>
            <person name="Ren Y."/>
            <person name="Liu Y."/>
            <person name="Feng L."/>
            <person name="Reeves P.R."/>
            <person name="Wang L."/>
        </authorList>
    </citation>
    <scope>NUCLEOTIDE SEQUENCE [LARGE SCALE GENOMIC DNA]</scope>
    <source>
        <strain>K12 / MC4100 / BW2952</strain>
    </source>
</reference>
<comment type="similarity">
    <text evidence="1">Belongs to the UPF0386 family.</text>
</comment>
<feature type="chain" id="PRO_1000213134" description="UPF0386 protein YjhX">
    <location>
        <begin position="1"/>
        <end position="85"/>
    </location>
</feature>
<accession>C4ZRH1</accession>
<sequence>MNLSRQEQHTLHVLAKGRRIAHVRDSSGRVTSVECYSREGLLLTDCTLAVFKKLKTKKLIKSVNGQPYRINTTELNKVRAQLDNR</sequence>
<gene>
    <name evidence="1" type="primary">yjhX</name>
    <name type="ordered locus">BWG_4006</name>
</gene>
<dbReference type="EMBL" id="CP001396">
    <property type="protein sequence ID" value="ACR62422.1"/>
    <property type="molecule type" value="Genomic_DNA"/>
</dbReference>
<dbReference type="RefSeq" id="WP_001054376.1">
    <property type="nucleotide sequence ID" value="NC_012759.1"/>
</dbReference>
<dbReference type="KEGG" id="ebw:BWG_4006"/>
<dbReference type="HOGENOM" id="CLU_164736_0_0_6"/>
<dbReference type="HAMAP" id="MF_00827">
    <property type="entry name" value="UPF0386"/>
    <property type="match status" value="1"/>
</dbReference>
<dbReference type="InterPro" id="IPR018654">
    <property type="entry name" value="YjhX_toxin"/>
</dbReference>
<dbReference type="NCBIfam" id="NF010240">
    <property type="entry name" value="PRK13687.1"/>
    <property type="match status" value="1"/>
</dbReference>
<dbReference type="Pfam" id="PF09857">
    <property type="entry name" value="YjhX_toxin"/>
    <property type="match status" value="1"/>
</dbReference>